<reference key="1">
    <citation type="submission" date="2003-10" db="EMBL/GenBank/DDBJ databases">
        <title>The complete genome sequence of the alkaliphilic Bacillus clausii KSM-K16.</title>
        <authorList>
            <person name="Takaki Y."/>
            <person name="Kageyama Y."/>
            <person name="Shimamura S."/>
            <person name="Suzuki H."/>
            <person name="Nishi S."/>
            <person name="Hatada Y."/>
            <person name="Kawai S."/>
            <person name="Ito S."/>
            <person name="Horikoshi K."/>
        </authorList>
    </citation>
    <scope>NUCLEOTIDE SEQUENCE [LARGE SCALE GENOMIC DNA]</scope>
    <source>
        <strain>KSM-K16</strain>
    </source>
</reference>
<dbReference type="EC" id="2.7.7.3" evidence="1"/>
<dbReference type="EMBL" id="AP006627">
    <property type="protein sequence ID" value="BAD64912.1"/>
    <property type="molecule type" value="Genomic_DNA"/>
</dbReference>
<dbReference type="RefSeq" id="WP_011247220.1">
    <property type="nucleotide sequence ID" value="NC_006582.1"/>
</dbReference>
<dbReference type="SMR" id="Q5WFE8"/>
<dbReference type="STRING" id="66692.ABC2377"/>
<dbReference type="KEGG" id="bcl:ABC2377"/>
<dbReference type="eggNOG" id="COG0669">
    <property type="taxonomic scope" value="Bacteria"/>
</dbReference>
<dbReference type="HOGENOM" id="CLU_100149_0_1_9"/>
<dbReference type="OrthoDB" id="9806661at2"/>
<dbReference type="UniPathway" id="UPA00241">
    <property type="reaction ID" value="UER00355"/>
</dbReference>
<dbReference type="Proteomes" id="UP000001168">
    <property type="component" value="Chromosome"/>
</dbReference>
<dbReference type="GO" id="GO:0005737">
    <property type="term" value="C:cytoplasm"/>
    <property type="evidence" value="ECO:0007669"/>
    <property type="project" value="UniProtKB-SubCell"/>
</dbReference>
<dbReference type="GO" id="GO:0005524">
    <property type="term" value="F:ATP binding"/>
    <property type="evidence" value="ECO:0007669"/>
    <property type="project" value="UniProtKB-KW"/>
</dbReference>
<dbReference type="GO" id="GO:0004595">
    <property type="term" value="F:pantetheine-phosphate adenylyltransferase activity"/>
    <property type="evidence" value="ECO:0007669"/>
    <property type="project" value="UniProtKB-UniRule"/>
</dbReference>
<dbReference type="GO" id="GO:0015937">
    <property type="term" value="P:coenzyme A biosynthetic process"/>
    <property type="evidence" value="ECO:0007669"/>
    <property type="project" value="UniProtKB-UniRule"/>
</dbReference>
<dbReference type="CDD" id="cd02163">
    <property type="entry name" value="PPAT"/>
    <property type="match status" value="1"/>
</dbReference>
<dbReference type="Gene3D" id="3.40.50.620">
    <property type="entry name" value="HUPs"/>
    <property type="match status" value="1"/>
</dbReference>
<dbReference type="HAMAP" id="MF_00151">
    <property type="entry name" value="PPAT_bact"/>
    <property type="match status" value="1"/>
</dbReference>
<dbReference type="InterPro" id="IPR004821">
    <property type="entry name" value="Cyt_trans-like"/>
</dbReference>
<dbReference type="InterPro" id="IPR001980">
    <property type="entry name" value="PPAT"/>
</dbReference>
<dbReference type="InterPro" id="IPR014729">
    <property type="entry name" value="Rossmann-like_a/b/a_fold"/>
</dbReference>
<dbReference type="NCBIfam" id="TIGR01510">
    <property type="entry name" value="coaD_prev_kdtB"/>
    <property type="match status" value="1"/>
</dbReference>
<dbReference type="NCBIfam" id="TIGR00125">
    <property type="entry name" value="cyt_tran_rel"/>
    <property type="match status" value="1"/>
</dbReference>
<dbReference type="PANTHER" id="PTHR21342">
    <property type="entry name" value="PHOSPHOPANTETHEINE ADENYLYLTRANSFERASE"/>
    <property type="match status" value="1"/>
</dbReference>
<dbReference type="PANTHER" id="PTHR21342:SF1">
    <property type="entry name" value="PHOSPHOPANTETHEINE ADENYLYLTRANSFERASE"/>
    <property type="match status" value="1"/>
</dbReference>
<dbReference type="Pfam" id="PF01467">
    <property type="entry name" value="CTP_transf_like"/>
    <property type="match status" value="1"/>
</dbReference>
<dbReference type="PRINTS" id="PR01020">
    <property type="entry name" value="LPSBIOSNTHSS"/>
</dbReference>
<dbReference type="SUPFAM" id="SSF52374">
    <property type="entry name" value="Nucleotidylyl transferase"/>
    <property type="match status" value="1"/>
</dbReference>
<proteinExistence type="inferred from homology"/>
<accession>Q5WFE8</accession>
<comment type="function">
    <text evidence="1">Reversibly transfers an adenylyl group from ATP to 4'-phosphopantetheine, yielding dephospho-CoA (dPCoA) and pyrophosphate.</text>
</comment>
<comment type="catalytic activity">
    <reaction evidence="1">
        <text>(R)-4'-phosphopantetheine + ATP + H(+) = 3'-dephospho-CoA + diphosphate</text>
        <dbReference type="Rhea" id="RHEA:19801"/>
        <dbReference type="ChEBI" id="CHEBI:15378"/>
        <dbReference type="ChEBI" id="CHEBI:30616"/>
        <dbReference type="ChEBI" id="CHEBI:33019"/>
        <dbReference type="ChEBI" id="CHEBI:57328"/>
        <dbReference type="ChEBI" id="CHEBI:61723"/>
        <dbReference type="EC" id="2.7.7.3"/>
    </reaction>
</comment>
<comment type="cofactor">
    <cofactor evidence="1">
        <name>Mg(2+)</name>
        <dbReference type="ChEBI" id="CHEBI:18420"/>
    </cofactor>
</comment>
<comment type="pathway">
    <text evidence="1">Cofactor biosynthesis; coenzyme A biosynthesis; CoA from (R)-pantothenate: step 4/5.</text>
</comment>
<comment type="subunit">
    <text evidence="1">Homohexamer.</text>
</comment>
<comment type="subcellular location">
    <subcellularLocation>
        <location evidence="1">Cytoplasm</location>
    </subcellularLocation>
</comment>
<comment type="similarity">
    <text evidence="1">Belongs to the bacterial CoaD family.</text>
</comment>
<sequence length="159" mass="17932">MKRAICSGSFDPVTNGHIDLFERAGALFDEIIIAILINNKKKPLFPLAERERLLRESIAHIKNATIDSFDGLLVDYAREKEATAIVRGLRSNADFEYEKNIATMNKELAPQLDTLFLMTDPNYSYVSSSIVKEVASYSQDVSKLVPQPVAHALKEVYRR</sequence>
<keyword id="KW-0067">ATP-binding</keyword>
<keyword id="KW-0173">Coenzyme A biosynthesis</keyword>
<keyword id="KW-0963">Cytoplasm</keyword>
<keyword id="KW-0460">Magnesium</keyword>
<keyword id="KW-0547">Nucleotide-binding</keyword>
<keyword id="KW-0548">Nucleotidyltransferase</keyword>
<keyword id="KW-1185">Reference proteome</keyword>
<keyword id="KW-0808">Transferase</keyword>
<protein>
    <recommendedName>
        <fullName evidence="1">Phosphopantetheine adenylyltransferase</fullName>
        <ecNumber evidence="1">2.7.7.3</ecNumber>
    </recommendedName>
    <alternativeName>
        <fullName evidence="1">Dephospho-CoA pyrophosphorylase</fullName>
    </alternativeName>
    <alternativeName>
        <fullName evidence="1">Pantetheine-phosphate adenylyltransferase</fullName>
        <shortName evidence="1">PPAT</shortName>
    </alternativeName>
</protein>
<feature type="chain" id="PRO_0000156168" description="Phosphopantetheine adenylyltransferase">
    <location>
        <begin position="1"/>
        <end position="159"/>
    </location>
</feature>
<feature type="binding site" evidence="1">
    <location>
        <begin position="9"/>
        <end position="10"/>
    </location>
    <ligand>
        <name>ATP</name>
        <dbReference type="ChEBI" id="CHEBI:30616"/>
    </ligand>
</feature>
<feature type="binding site" evidence="1">
    <location>
        <position position="9"/>
    </location>
    <ligand>
        <name>substrate</name>
    </ligand>
</feature>
<feature type="binding site" evidence="1">
    <location>
        <position position="17"/>
    </location>
    <ligand>
        <name>ATP</name>
        <dbReference type="ChEBI" id="CHEBI:30616"/>
    </ligand>
</feature>
<feature type="binding site" evidence="1">
    <location>
        <position position="41"/>
    </location>
    <ligand>
        <name>substrate</name>
    </ligand>
</feature>
<feature type="binding site" evidence="1">
    <location>
        <position position="73"/>
    </location>
    <ligand>
        <name>substrate</name>
    </ligand>
</feature>
<feature type="binding site" evidence="1">
    <location>
        <position position="87"/>
    </location>
    <ligand>
        <name>substrate</name>
    </ligand>
</feature>
<feature type="binding site" evidence="1">
    <location>
        <begin position="88"/>
        <end position="90"/>
    </location>
    <ligand>
        <name>ATP</name>
        <dbReference type="ChEBI" id="CHEBI:30616"/>
    </ligand>
</feature>
<feature type="binding site" evidence="1">
    <location>
        <position position="98"/>
    </location>
    <ligand>
        <name>ATP</name>
        <dbReference type="ChEBI" id="CHEBI:30616"/>
    </ligand>
</feature>
<feature type="binding site" evidence="1">
    <location>
        <begin position="123"/>
        <end position="129"/>
    </location>
    <ligand>
        <name>ATP</name>
        <dbReference type="ChEBI" id="CHEBI:30616"/>
    </ligand>
</feature>
<feature type="site" description="Transition state stabilizer" evidence="1">
    <location>
        <position position="17"/>
    </location>
</feature>
<gene>
    <name evidence="1" type="primary">coaD</name>
    <name type="ordered locus">ABC2377</name>
</gene>
<name>COAD_SHOC1</name>
<organism>
    <name type="scientific">Shouchella clausii (strain KSM-K16)</name>
    <name type="common">Alkalihalobacillus clausii</name>
    <dbReference type="NCBI Taxonomy" id="66692"/>
    <lineage>
        <taxon>Bacteria</taxon>
        <taxon>Bacillati</taxon>
        <taxon>Bacillota</taxon>
        <taxon>Bacilli</taxon>
        <taxon>Bacillales</taxon>
        <taxon>Bacillaceae</taxon>
        <taxon>Shouchella</taxon>
    </lineage>
</organism>
<evidence type="ECO:0000255" key="1">
    <source>
        <dbReference type="HAMAP-Rule" id="MF_00151"/>
    </source>
</evidence>